<protein>
    <recommendedName>
        <fullName>SWI/SNF-related matrix-associated actin-dependent regulator of chromatin subfamily A member 5</fullName>
        <shortName evidence="23">SMARCA5</shortName>
        <shortName>SWI/SNF-related matrix-associated actin-dependent regulator of chromatin A5</shortName>
        <ecNumber evidence="11 17">3.6.4.-</ecNumber>
    </recommendedName>
    <alternativeName>
        <fullName>Sucrose nonfermenting protein 2 homolog</fullName>
        <shortName evidence="20 21 22 23">hSNF2H</shortName>
    </alternativeName>
</protein>
<evidence type="ECO:0000250" key="1">
    <source>
        <dbReference type="UniProtKB" id="Q91ZW3"/>
    </source>
</evidence>
<evidence type="ECO:0000255" key="2">
    <source>
        <dbReference type="PROSITE-ProRule" id="PRU00541"/>
    </source>
</evidence>
<evidence type="ECO:0000255" key="3">
    <source>
        <dbReference type="PROSITE-ProRule" id="PRU00542"/>
    </source>
</evidence>
<evidence type="ECO:0000255" key="4">
    <source>
        <dbReference type="PROSITE-ProRule" id="PRU00624"/>
    </source>
</evidence>
<evidence type="ECO:0000256" key="5">
    <source>
        <dbReference type="SAM" id="MobiDB-lite"/>
    </source>
</evidence>
<evidence type="ECO:0000269" key="6">
    <source>
    </source>
</evidence>
<evidence type="ECO:0000269" key="7">
    <source>
    </source>
</evidence>
<evidence type="ECO:0000269" key="8">
    <source>
    </source>
</evidence>
<evidence type="ECO:0000269" key="9">
    <source>
    </source>
</evidence>
<evidence type="ECO:0000269" key="10">
    <source>
    </source>
</evidence>
<evidence type="ECO:0000269" key="11">
    <source>
    </source>
</evidence>
<evidence type="ECO:0000269" key="12">
    <source>
    </source>
</evidence>
<evidence type="ECO:0000269" key="13">
    <source>
    </source>
</evidence>
<evidence type="ECO:0000269" key="14">
    <source>
    </source>
</evidence>
<evidence type="ECO:0000269" key="15">
    <source>
    </source>
</evidence>
<evidence type="ECO:0000269" key="16">
    <source>
    </source>
</evidence>
<evidence type="ECO:0000269" key="17">
    <source>
    </source>
</evidence>
<evidence type="ECO:0000269" key="18">
    <source>
    </source>
</evidence>
<evidence type="ECO:0000269" key="19">
    <source>
    </source>
</evidence>
<evidence type="ECO:0000303" key="20">
    <source>
    </source>
</evidence>
<evidence type="ECO:0000303" key="21">
    <source>
    </source>
</evidence>
<evidence type="ECO:0000303" key="22">
    <source>
    </source>
</evidence>
<evidence type="ECO:0000303" key="23">
    <source>
    </source>
</evidence>
<evidence type="ECO:0000305" key="24"/>
<evidence type="ECO:0000305" key="25">
    <source>
    </source>
</evidence>
<evidence type="ECO:0000312" key="26">
    <source>
        <dbReference type="HGNC" id="HGNC:11101"/>
    </source>
</evidence>
<evidence type="ECO:0007744" key="27">
    <source>
    </source>
</evidence>
<evidence type="ECO:0007744" key="28">
    <source>
    </source>
</evidence>
<evidence type="ECO:0007744" key="29">
    <source>
    </source>
</evidence>
<evidence type="ECO:0007744" key="30">
    <source>
    </source>
</evidence>
<evidence type="ECO:0007744" key="31">
    <source>
    </source>
</evidence>
<evidence type="ECO:0007744" key="32">
    <source>
    </source>
</evidence>
<evidence type="ECO:0007744" key="33">
    <source>
    </source>
</evidence>
<evidence type="ECO:0007744" key="34">
    <source>
    </source>
</evidence>
<evidence type="ECO:0007744" key="35">
    <source>
    </source>
</evidence>
<evidence type="ECO:0007744" key="36">
    <source>
    </source>
</evidence>
<evidence type="ECO:0007744" key="37">
    <source>
    </source>
</evidence>
<name>SMCA5_HUMAN</name>
<feature type="initiator methionine" description="Removed" evidence="30">
    <location>
        <position position="1"/>
    </location>
</feature>
<feature type="chain" id="PRO_0000074354" description="SWI/SNF-related matrix-associated actin-dependent regulator of chromatin subfamily A member 5">
    <location>
        <begin position="2"/>
        <end position="1052"/>
    </location>
</feature>
<feature type="domain" description="Helicase ATP-binding" evidence="2">
    <location>
        <begin position="192"/>
        <end position="357"/>
    </location>
</feature>
<feature type="domain" description="Helicase C-terminal" evidence="3">
    <location>
        <begin position="487"/>
        <end position="638"/>
    </location>
</feature>
<feature type="domain" description="SANT 1" evidence="4">
    <location>
        <begin position="840"/>
        <end position="892"/>
    </location>
</feature>
<feature type="domain" description="SANT 2" evidence="4">
    <location>
        <begin position="943"/>
        <end position="1007"/>
    </location>
</feature>
<feature type="region of interest" description="Disordered" evidence="5">
    <location>
        <begin position="1"/>
        <end position="83"/>
    </location>
</feature>
<feature type="region of interest" description="Disordered" evidence="5">
    <location>
        <begin position="1015"/>
        <end position="1052"/>
    </location>
</feature>
<feature type="short sequence motif" description="DEAH box">
    <location>
        <begin position="308"/>
        <end position="311"/>
    </location>
</feature>
<feature type="compositionally biased region" description="Pro residues" evidence="5">
    <location>
        <begin position="1"/>
        <end position="15"/>
    </location>
</feature>
<feature type="compositionally biased region" description="Low complexity" evidence="5">
    <location>
        <begin position="16"/>
        <end position="55"/>
    </location>
</feature>
<feature type="compositionally biased region" description="Basic and acidic residues" evidence="5">
    <location>
        <begin position="69"/>
        <end position="83"/>
    </location>
</feature>
<feature type="compositionally biased region" description="Basic residues" evidence="5">
    <location>
        <begin position="1023"/>
        <end position="1034"/>
    </location>
</feature>
<feature type="compositionally biased region" description="Basic and acidic residues" evidence="5">
    <location>
        <begin position="1035"/>
        <end position="1044"/>
    </location>
</feature>
<feature type="binding site" evidence="24">
    <location>
        <begin position="205"/>
        <end position="212"/>
    </location>
    <ligand>
        <name>ATP</name>
        <dbReference type="ChEBI" id="CHEBI:30616"/>
    </ligand>
</feature>
<feature type="modified residue" description="N-acetylserine" evidence="30">
    <location>
        <position position="2"/>
    </location>
</feature>
<feature type="modified residue" description="Phosphoserine" evidence="27 28 29 32 36">
    <location>
        <position position="66"/>
    </location>
</feature>
<feature type="modified residue" description="Phosphothreonine" evidence="33">
    <location>
        <position position="113"/>
    </location>
</feature>
<feature type="modified residue" description="Phosphoserine" evidence="28 35">
    <location>
        <position position="116"/>
    </location>
</feature>
<feature type="modified residue" description="Phosphoserine" evidence="28 33 35">
    <location>
        <position position="137"/>
    </location>
</feature>
<feature type="modified residue" description="Phosphoserine" evidence="35">
    <location>
        <position position="171"/>
    </location>
</feature>
<feature type="modified residue" description="N6-acetyllysine" evidence="31">
    <location>
        <position position="440"/>
    </location>
</feature>
<feature type="modified residue" description="Phosphoserine" evidence="35">
    <location>
        <position position="755"/>
    </location>
</feature>
<feature type="modified residue" description="Phosphoserine" evidence="33 34">
    <location>
        <position position="825"/>
    </location>
</feature>
<feature type="cross-link" description="Glycyl lysine isopeptide (Lys-Gly) (interchain with G-Cter in SUMO2)" evidence="37">
    <location>
        <position position="83"/>
    </location>
</feature>
<feature type="cross-link" description="Glycyl lysine isopeptide (Lys-Gly) (interchain with G-Cter in SUMO2)" evidence="37">
    <location>
        <position position="644"/>
    </location>
</feature>
<feature type="cross-link" description="Glycyl lysine isopeptide (Lys-Gly) (interchain with G-Cter in SUMO2)" evidence="37">
    <location>
        <position position="647"/>
    </location>
</feature>
<feature type="cross-link" description="Glycyl lysine isopeptide (Lys-Gly) (interchain with G-Cter in SUMO2)" evidence="37">
    <location>
        <position position="694"/>
    </location>
</feature>
<feature type="cross-link" description="Glycyl lysine isopeptide (Lys-Gly) (interchain with G-Cter in SUMO2)" evidence="37">
    <location>
        <position position="722"/>
    </location>
</feature>
<feature type="cross-link" description="Glycyl lysine isopeptide (Lys-Gly) (interchain with G-Cter in SUMO2)" evidence="37">
    <location>
        <position position="735"/>
    </location>
</feature>
<feature type="cross-link" description="Glycyl lysine isopeptide (Lys-Gly) (interchain with G-Cter in SUMO2)" evidence="37">
    <location>
        <position position="966"/>
    </location>
</feature>
<feature type="mutagenesis site" description="Abolishes ATP hydrolysis. Binds to chromatin itself, but abolishes the chromatin binding of the cohesin complex component RAD21." evidence="9 37">
    <original>K</original>
    <variation>R</variation>
    <location>
        <position position="211"/>
    </location>
</feature>
<comment type="function">
    <text evidence="1 6 8 9 10 11 12 13 14 15 17">ATPase that possesses intrinsic ATP-dependent nucleosome-remodeling activity (PubMed:12972596, PubMed:28801535). Catalytic subunit of ISWI chromatin-remodeling complexes, which form ordered nucleosome arrays on chromatin and facilitate access to DNA during DNA-templated processes such as DNA replication, transcription, and repair; this may require intact histone H4 tails (PubMed:10880450, PubMed:12198550, PubMed:12434153, PubMed:12972596, PubMed:23911928, PubMed:28801535). Within the ISWI chromatin-remodeling complexes, slides edge- and center-positioned histone octamers away from their original location on the DNA template (PubMed:28801535). Catalytic activity and histone octamer sliding propensity is regulated and determined by components of the ISWI chromatin-remodeling complexes (PubMed:28801535). The BAZ1A/ACF1-, BAZ1B/WSTF-, BAZ2A/TIP5- and BAZ2B-containing ISWI chromatin-remodeling complexes regulate the spacing of nucleosomes along the chromatin and have the ability to slide mononucleosomes to the center of a DNA template in an ATP-dependent manner (PubMed:14759371, PubMed:15543136, PubMed:28801535). The CECR2- and RSF1-containing ISWI chromatin-remodeling complexes do not have the ability to slide mononucleosomes to the center of a DNA template (PubMed:28801535). Binds to core histones together with RSF1, and is required for the assembly of regular nucleosome arrays by the RSF-5 ISWI chromatin-remodeling complex (PubMed:12972596). Involved in DNA replication and together with BAZ1A/ACF1 is required for replication of pericentric heterochromatin in S-phase (PubMed:12434153). Probably plays a role in repression of RNA polymerase I dependent transcription of the rDNA locus, through the recruitment of the SIN3/HDAC1 corepressor complex to the rDNA promoter (By similarity). Essential component of the WICH-5 ISWI chromatin-remodeling complex (also called the WICH complex), a chromatin-remodeling complex that mobilizes nucleosomes and reconfigures irregular chromatin to a regular nucleosomal array structure (PubMed:11980720, PubMed:15543136). The WICH-5 ISWI chromatin-remodeling complex regulates the transcription of various genes, has a role in RNA polymerase I transcription (By similarity). Within the B-WICH complex has a role in RNA polymerase III transcription (PubMed:16603771). Mediates the histone H2AX phosphorylation at 'Tyr-142', and is involved in the maintenance of chromatin structures during DNA replication processes (By similarity). Essential component of NoRC-5 ISWI chromatin-remodeling complex, a complex that mediates silencing of a fraction of rDNA by recruiting histone-modifying enzymes and DNA methyltransferases, leading to heterochromatin formation and transcriptional silencing (By similarity).</text>
</comment>
<comment type="catalytic activity">
    <reaction evidence="11">
        <text>ATP + H2O = ADP + phosphate + H(+)</text>
        <dbReference type="Rhea" id="RHEA:13065"/>
        <dbReference type="ChEBI" id="CHEBI:15377"/>
        <dbReference type="ChEBI" id="CHEBI:15378"/>
        <dbReference type="ChEBI" id="CHEBI:30616"/>
        <dbReference type="ChEBI" id="CHEBI:43474"/>
        <dbReference type="ChEBI" id="CHEBI:456216"/>
    </reaction>
    <physiologicalReaction direction="left-to-right" evidence="25">
        <dbReference type="Rhea" id="RHEA:13066"/>
    </physiologicalReaction>
</comment>
<comment type="subunit">
    <text evidence="1 6 8 9 10 11 12 13 14 15 16 17">Component of the ACF-5 ISWI chromatin-remodeling complex (also called the ACF/WCRF complex) at least composed of SMARCA5/SNF2H and BAZ1A/ACF1, which regulates the spacing of histone octamers on the DNA template to facilitate access to DNA (PubMed:10880450, PubMed:12198550, PubMed:12434153, PubMed:28801535). Within the complex interacts with BAZ1A/ACF1; the interaction is direct and is required to slide nucleosomes from end to center positions on a DNA template in an ATP-dependent manner (PubMed:10880450, PubMed:12198550, PubMed:12434153, PubMed:28801535). Component of the CHRAC ISWI chromatin-remodeling complex at least composed of SMARCA5/SNF2H, BAZ1A/ACF1, CHRAC1 and POLE3; the complex preferentially binds DNA through the CHRAC1-POLE3 heterodimer and possesses ATP-dependent nucleosome-remodeling activity (PubMed:10880450, PubMed:12434153). Within the complex interacts with BAZ1A/ACF1; the interaction is direct and promotes the interaction with the POLE3-CHRAC1 heterodimer (PubMed:10880450, PubMed:12434153, PubMed:14759371). Within the complex interacts with the POLE3-CHRAC1 heterodimer; the interaction is direct and enhances nucleosome sliding activity by the SMARCA5/SNF2H and BAZ1A/ACF1 interaction (PubMed:10880450, PubMed:14759371). Neither POLE3 nor CHRAC1 enhances nucleosome sliding activity of the ACF-5 ISWI chromatin remodeling complex (PubMed:14759371). Component of the WICH-5 ISWI chromatin-remodeling complex (also called the WICH complex) at least composed of SMARCA5/SNF2H and BAZ1B/WSTF, which regulates the spacing of histone octamers on the DNA template to facilitate access to DNA (PubMed:11980720, PubMed:28801535). Within the complex interacts with BAZ1B/WSTF (PubMed:11980720, PubMed:15543136, PubMed:28801535). Component of the NoRC-5 ISWI chromatin-remodeling complex (also called the NoRC chromatin-remodeling complex) at least composed of SMARCA5/SNF2H and BAZ2A/TIP5; the complex suppresses rDNA transcription by a combination of nucleosome remodeling, histone deacetylation, and DNA methylation (PubMed:28801535). Within the complex interacts with BAZ2A/TIP5 (PubMed:28801535). Within the complex interacts with HDAC1 (By similarity). Component of the BRF-5 ISWI chromatin-remodeling complex at least composed of SMARCA5/SNF2H and BAZ2B (PubMed:28801535). Within the complex interacts with BAZ2B (PubMed:28801535). Component of the NURF-5 ISWI chromatin-remodeling complex at least composed of SMARCA5/SNF2H and BPTF (PubMed:28801535). Within the complex interacts with BPFT (PubMed:28801535). Component of the CERF-5 ISWI chromatin-remodeling complex at least composed of SMARCA5/SNF2H and CECR2 (PubMed:28801535). LUZP1 is detected as part of the CERF-5 complex in embryonic stem cells where it is involved in complex stabilization but is not detected in the complex in the testis (By similarity). Within the complex interacts with CECR2 (PubMed:28801535). Component of the RSF-5 ISWI chromatin-remodeling complex (also called the RSF complex) at least composed of SMARCA5/SNF2H and RSF1 (PubMed:12972596, PubMed:28801535). Within the complex interacts with RSF1 (PubMed:12972596, PubMed:28801535). Interacts with the cohesin complex component RAD21; the interaction is direct (PubMed:12198550). Interacts with the NuRD complex components HDAC2, RBBP4 and CHD4; the interactions are direct (PubMed:12198550). Interacts with PCNA (PubMed:15543136). Component of the B-WICH complex, at least composed of SMARCA5/SNF2H, BAZ1B/WSTF, SF3B1, DEK, MYO1C, ERCC6, MYBBP1A and DDX21 which positively regulates RNA polymerase III transcription (PubMed:16603771). Interacts with MYO1C (By similarity). Interacts with BEND3 (PubMed:26100909). Interacts with SIRT6; promoting recruitment to DNA damage sites (PubMed:23911928).</text>
</comment>
<comment type="subunit">
    <text evidence="19">(Microbial infection) Interacts with JC virus small t antigen.</text>
</comment>
<comment type="subunit">
    <text evidence="18">(Microbial infection) Interacts with Epstein Barr virus (EBV) lytic switch protein BZLF1; this interaction participates to the activation of early lytic viral genes by BZLF1.</text>
</comment>
<comment type="interaction">
    <interactant intactId="EBI-352588">
        <id>O60264</id>
    </interactant>
    <interactant intactId="EBI-927511">
        <id>Q9NRL2</id>
        <label>BAZ1A</label>
    </interactant>
    <organismsDiffer>false</organismsDiffer>
    <experiments>4</experiments>
</comment>
<comment type="interaction">
    <interactant intactId="EBI-352588">
        <id>O60264</id>
    </interactant>
    <interactant intactId="EBI-927482">
        <id>Q9UIG0</id>
        <label>BAZ1B</label>
    </interactant>
    <organismsDiffer>false</organismsDiffer>
    <experiments>8</experiments>
</comment>
<comment type="interaction">
    <interactant intactId="EBI-352588">
        <id>O60264</id>
    </interactant>
    <interactant intactId="EBI-1560273">
        <id>Q12830</id>
        <label>BPTF</label>
    </interactant>
    <organismsDiffer>false</organismsDiffer>
    <experiments>2</experiments>
</comment>
<comment type="interaction">
    <interactant intactId="EBI-352588">
        <id>O60264</id>
    </interactant>
    <interactant intactId="EBI-302023">
        <id>P62805</id>
        <label>H4C9</label>
    </interactant>
    <organismsDiffer>false</organismsDiffer>
    <experiments>2</experiments>
</comment>
<comment type="interaction">
    <interactant intactId="EBI-352588">
        <id>O60264</id>
    </interactant>
    <interactant intactId="EBI-926768">
        <id>Q96T23</id>
        <label>RSF1</label>
    </interactant>
    <organismsDiffer>false</organismsDiffer>
    <experiments>6</experiments>
</comment>
<comment type="subcellular location">
    <subcellularLocation>
        <location evidence="4 10 11 13 19">Nucleus</location>
    </subcellularLocation>
    <subcellularLocation>
        <location evidence="11 15">Chromosome</location>
    </subcellularLocation>
    <text evidence="11 13 15">Localizes to mitotic chromosomes (PubMed:12972596). Co-localizes with RSF1 in the nucleus (PubMed:12972596). Co-localizes with PCNA at replication foci during S phase (PubMed:15543136). Co-localizes with BAZ1B/WSTF at replication foci during late-S phase (PubMed:15543136). Recruited to DNA damage sites following interaction with SIRT6 (PubMed:23911928).</text>
</comment>
<comment type="tissue specificity">
    <text>Ubiquitously expressed.</text>
</comment>
<comment type="developmental stage">
    <text evidence="7">Overexpressed in CD34-positive erythrocyte progenitor cells in acute myeloid leukemia. Down-regulation correlates with hematologic remission following chemotherapy.</text>
</comment>
<comment type="similarity">
    <text evidence="24">Belongs to the SNF2/RAD54 helicase family. ISWI subfamily.</text>
</comment>
<comment type="caution">
    <text evidence="11">Like other proteins within the SNF2 family, they do not possess helicase activity but instead remodel chromatin via an ATP-dependent translocation mechanism.</text>
</comment>
<keyword id="KW-0002">3D-structure</keyword>
<keyword id="KW-0007">Acetylation</keyword>
<keyword id="KW-0156">Chromatin regulator</keyword>
<keyword id="KW-0158">Chromosome</keyword>
<keyword id="KW-0945">Host-virus interaction</keyword>
<keyword id="KW-0378">Hydrolase</keyword>
<keyword id="KW-1017">Isopeptide bond</keyword>
<keyword id="KW-0539">Nucleus</keyword>
<keyword id="KW-0597">Phosphoprotein</keyword>
<keyword id="KW-1267">Proteomics identification</keyword>
<keyword id="KW-1185">Reference proteome</keyword>
<keyword id="KW-0677">Repeat</keyword>
<keyword id="KW-0832">Ubl conjugation</keyword>
<gene>
    <name evidence="26" type="primary">SMARCA5</name>
    <name evidence="20 21 22 23" type="synonym">SNF2H</name>
    <name type="synonym">WCRF135</name>
</gene>
<sequence length="1052" mass="121905">MSSAAEPPPPPPPESAPSKPAASIASGGSNSSNKGGPEGVAAQAVASAASAGPADAEMEEIFDDASPGKQKEIQEPDPTYEEKMQTDRANRFEYLLKQTELFAHFIQPAAQKTPTSPLKMKPGRPRIKKDEKQNLLSVGDYRHRRTEQEEDEELLTESSKATNVCTRFEDSPSYVKWGKLRDYQVRGLNWLISLYENGINGILADEMGLGKTLQTISLLGYMKHYRNIPGPHMVLVPKSTLHNWMSEFKRWVPTLRSVCLIGDKEQRAAFVRDVLLPGEWDVCVTSYEMLIKEKSVFKKFNWRYLVIDEAHRIKNEKSKLSEIVREFKTTNRLLLTGTPLQNNLHELWSLLNFLLPDVFNSADDFDSWFDTNNCLGDQKLVERLHMVLRPFLLRRIKADVEKSLPPKKEVKIYVGLSKMQREWYTRILMKDIDILNSAGKMDKMRLLNILMQLRKCCNHPYLFDGAEPGPPYTTDMHLVTNSGKMVVLDKLLPKLKEQGSRVLIFSQMTRVLDILEDYCMWRNYEYCRLDGQTPHDERQDSINAYNEPNSTKFVFMLSTRAGGLGINLATADVVILYDSDWNPQVDLQAMDRAHRIGQTKTVRVFRFITDNTVEERIVERAEMKLRLDSIVIQQGRLVDQNLNKIGKDEMLQMIRHGATHVFASKESEITDEDIDGILERGAKKTAEMNEKLSKMGESSLRNFTMDTESSVYNFEGEDYREKQKIAFTEWIEPPKRERKANYAVDAYFREALRVSEPKAPKAPRPPKQPNVQDFQFFPPRLFELLEKEILFYRKTIGYKVPRNPELPNAAQAQKEEQLKIDEAESLNDEELEEKEKLLTQGFTNWNKRDFNQFIKANEKWGRDDIENIAREVEGKTPEEVIEYSAVFWERCNELQDIEKIMAQIERGEARIQRRISIKKALDTKIGRYKAPFHQLRISYGTNKGKNYTEEEDRFLICMLHKLGFDKENVYDELRQCIRNSPQFRFDWFLKSRTAMELQRRCNTLITLIERENMELEEKEKAEKKKRGPKPSTQKRKMDGAPDGRGRKKKLKL</sequence>
<accession>O60264</accession>
<proteinExistence type="evidence at protein level"/>
<dbReference type="EC" id="3.6.4.-" evidence="11 17"/>
<dbReference type="EMBL" id="AB010882">
    <property type="protein sequence ID" value="BAA25173.1"/>
    <property type="molecule type" value="mRNA"/>
</dbReference>
<dbReference type="EMBL" id="BC023144">
    <property type="protein sequence ID" value="AAH23144.1"/>
    <property type="molecule type" value="mRNA"/>
</dbReference>
<dbReference type="CCDS" id="CCDS3761.1"/>
<dbReference type="RefSeq" id="NP_003592.3">
    <property type="nucleotide sequence ID" value="NM_003601.3"/>
</dbReference>
<dbReference type="PDB" id="6NE3">
    <property type="method" value="EM"/>
    <property type="resolution" value="3.90 A"/>
    <property type="chains" value="W=166-634"/>
</dbReference>
<dbReference type="PDB" id="8V4Y">
    <property type="method" value="EM"/>
    <property type="resolution" value="2.80 A"/>
    <property type="chains" value="W=1-1052"/>
</dbReference>
<dbReference type="PDB" id="8V6V">
    <property type="method" value="EM"/>
    <property type="resolution" value="2.80 A"/>
    <property type="chains" value="W/X=1-1052"/>
</dbReference>
<dbReference type="PDB" id="8V7L">
    <property type="method" value="EM"/>
    <property type="resolution" value="2.90 A"/>
    <property type="chains" value="W=1-1052"/>
</dbReference>
<dbReference type="PDB" id="9E1L">
    <property type="method" value="EM"/>
    <property type="resolution" value="3.15 A"/>
    <property type="chains" value="W=1-1052"/>
</dbReference>
<dbReference type="PDB" id="9E1M">
    <property type="method" value="EM"/>
    <property type="resolution" value="3.25 A"/>
    <property type="chains" value="W=1-1052"/>
</dbReference>
<dbReference type="PDB" id="9E1N">
    <property type="method" value="EM"/>
    <property type="resolution" value="3.40 A"/>
    <property type="chains" value="W=1-1052"/>
</dbReference>
<dbReference type="PDB" id="9E1O">
    <property type="method" value="EM"/>
    <property type="resolution" value="3.30 A"/>
    <property type="chains" value="W=1-1052"/>
</dbReference>
<dbReference type="PDB" id="9E1P">
    <property type="method" value="EM"/>
    <property type="resolution" value="3.25 A"/>
    <property type="chains" value="W=1-1052"/>
</dbReference>
<dbReference type="PDB" id="9E1Q">
    <property type="method" value="EM"/>
    <property type="resolution" value="3.10 A"/>
    <property type="chains" value="W=1-1052"/>
</dbReference>
<dbReference type="PDB" id="9E1R">
    <property type="method" value="EM"/>
    <property type="resolution" value="3.10 A"/>
    <property type="chains" value="W=1-1052"/>
</dbReference>
<dbReference type="PDB" id="9E1U">
    <property type="method" value="EM"/>
    <property type="resolution" value="3.10 A"/>
    <property type="chains" value="W=1-1052"/>
</dbReference>
<dbReference type="PDB" id="9E1V">
    <property type="method" value="EM"/>
    <property type="resolution" value="3.10 A"/>
    <property type="chains" value="W=1-1052"/>
</dbReference>
<dbReference type="PDB" id="9E1W">
    <property type="method" value="EM"/>
    <property type="resolution" value="3.20 A"/>
    <property type="chains" value="W=1-1052"/>
</dbReference>
<dbReference type="PDB" id="9E1X">
    <property type="method" value="EM"/>
    <property type="resolution" value="3.40 A"/>
    <property type="chains" value="W=1-1052"/>
</dbReference>
<dbReference type="PDBsum" id="6NE3"/>
<dbReference type="PDBsum" id="8V4Y"/>
<dbReference type="PDBsum" id="8V6V"/>
<dbReference type="PDBsum" id="8V7L"/>
<dbReference type="PDBsum" id="9E1L"/>
<dbReference type="PDBsum" id="9E1M"/>
<dbReference type="PDBsum" id="9E1N"/>
<dbReference type="PDBsum" id="9E1O"/>
<dbReference type="PDBsum" id="9E1P"/>
<dbReference type="PDBsum" id="9E1Q"/>
<dbReference type="PDBsum" id="9E1R"/>
<dbReference type="PDBsum" id="9E1U"/>
<dbReference type="PDBsum" id="9E1V"/>
<dbReference type="PDBsum" id="9E1W"/>
<dbReference type="PDBsum" id="9E1X"/>
<dbReference type="EMDB" id="EMD-42977"/>
<dbReference type="EMDB" id="EMD-43000"/>
<dbReference type="EMDB" id="EMD-43001"/>
<dbReference type="EMDB" id="EMD-43002"/>
<dbReference type="EMDB" id="EMD-43003"/>
<dbReference type="EMDB" id="EMD-43004"/>
<dbReference type="EMDB" id="EMD-43005"/>
<dbReference type="EMDB" id="EMD-47412"/>
<dbReference type="EMDB" id="EMD-47413"/>
<dbReference type="EMDB" id="EMD-47414"/>
<dbReference type="EMDB" id="EMD-47415"/>
<dbReference type="EMDB" id="EMD-47416"/>
<dbReference type="EMDB" id="EMD-47417"/>
<dbReference type="EMDB" id="EMD-47418"/>
<dbReference type="EMDB" id="EMD-47421"/>
<dbReference type="EMDB" id="EMD-47422"/>
<dbReference type="EMDB" id="EMD-47423"/>
<dbReference type="EMDB" id="EMD-47424"/>
<dbReference type="EMDB" id="EMD-47428"/>
<dbReference type="EMDB" id="EMD-9356"/>
<dbReference type="SMR" id="O60264"/>
<dbReference type="BioGRID" id="114045">
    <property type="interactions" value="433"/>
</dbReference>
<dbReference type="ComplexPortal" id="CPX-1099">
    <property type="entry name" value="B-WICH chromatin remodelling complex"/>
</dbReference>
<dbReference type="ComplexPortal" id="CPX-25738">
    <property type="entry name" value="CERF chromatin remodelling complex, SMARCA5 variant"/>
</dbReference>
<dbReference type="ComplexPortal" id="CPX-432">
    <property type="entry name" value="NoRC chromatin remodelling complex"/>
</dbReference>
<dbReference type="ComplexPortal" id="CPX-434">
    <property type="entry name" value="ACF chromatin remodeling complex"/>
</dbReference>
<dbReference type="ComplexPortal" id="CPX-455">
    <property type="entry name" value="RSF complex"/>
</dbReference>
<dbReference type="ComplexPortal" id="CPX-757">
    <property type="entry name" value="WICH chromatin remodelling complex"/>
</dbReference>
<dbReference type="ComplexPortal" id="CPX-785">
    <property type="entry name" value="CHRAC chromatin remodeling complex"/>
</dbReference>
<dbReference type="CORUM" id="O60264"/>
<dbReference type="DIP" id="DIP-33204N"/>
<dbReference type="FunCoup" id="O60264">
    <property type="interactions" value="3396"/>
</dbReference>
<dbReference type="IntAct" id="O60264">
    <property type="interactions" value="141"/>
</dbReference>
<dbReference type="MINT" id="O60264"/>
<dbReference type="STRING" id="9606.ENSP00000283131"/>
<dbReference type="DrugBank" id="DB02670">
    <property type="generic name" value="4-Deoxy-Alpha-D-Glucose"/>
</dbReference>
<dbReference type="DrugBank" id="DB02379">
    <property type="generic name" value="Beta-D-Glucose"/>
</dbReference>
<dbReference type="GlyGen" id="O60264">
    <property type="glycosylation" value="2 sites, 1 N-linked glycan (1 site), 1 O-linked glycan (1 site)"/>
</dbReference>
<dbReference type="iPTMnet" id="O60264"/>
<dbReference type="MetOSite" id="O60264"/>
<dbReference type="PhosphoSitePlus" id="O60264"/>
<dbReference type="SwissPalm" id="O60264"/>
<dbReference type="BioMuta" id="SMARCA5"/>
<dbReference type="CPTAC" id="CPTAC-1636"/>
<dbReference type="jPOST" id="O60264"/>
<dbReference type="MassIVE" id="O60264"/>
<dbReference type="PaxDb" id="9606-ENSP00000283131"/>
<dbReference type="PeptideAtlas" id="O60264"/>
<dbReference type="ProteomicsDB" id="49297"/>
<dbReference type="Pumba" id="O60264"/>
<dbReference type="Antibodypedia" id="1804">
    <property type="antibodies" value="394 antibodies from 37 providers"/>
</dbReference>
<dbReference type="DNASU" id="8467"/>
<dbReference type="Ensembl" id="ENST00000283131.4">
    <property type="protein sequence ID" value="ENSP00000283131.3"/>
    <property type="gene ID" value="ENSG00000153147.6"/>
</dbReference>
<dbReference type="GeneID" id="8467"/>
<dbReference type="KEGG" id="hsa:8467"/>
<dbReference type="MANE-Select" id="ENST00000283131.4">
    <property type="protein sequence ID" value="ENSP00000283131.3"/>
    <property type="RefSeq nucleotide sequence ID" value="NM_003601.4"/>
    <property type="RefSeq protein sequence ID" value="NP_003592.3"/>
</dbReference>
<dbReference type="UCSC" id="uc003ijg.4">
    <property type="organism name" value="human"/>
</dbReference>
<dbReference type="AGR" id="HGNC:11101"/>
<dbReference type="CTD" id="8467"/>
<dbReference type="DisGeNET" id="8467"/>
<dbReference type="GeneCards" id="SMARCA5"/>
<dbReference type="HGNC" id="HGNC:11101">
    <property type="gene designation" value="SMARCA5"/>
</dbReference>
<dbReference type="HPA" id="ENSG00000153147">
    <property type="expression patterns" value="Low tissue specificity"/>
</dbReference>
<dbReference type="MalaCards" id="SMARCA5"/>
<dbReference type="MIM" id="603375">
    <property type="type" value="gene"/>
</dbReference>
<dbReference type="neXtProt" id="NX_O60264"/>
<dbReference type="OpenTargets" id="ENSG00000153147"/>
<dbReference type="Orphanet" id="370334">
    <property type="disease" value="Extraskeletal Ewing sarcoma"/>
</dbReference>
<dbReference type="PharmGKB" id="PA35951"/>
<dbReference type="VEuPathDB" id="HostDB:ENSG00000153147"/>
<dbReference type="eggNOG" id="KOG0385">
    <property type="taxonomic scope" value="Eukaryota"/>
</dbReference>
<dbReference type="GeneTree" id="ENSGT00940000156733"/>
<dbReference type="HOGENOM" id="CLU_000315_0_2_1"/>
<dbReference type="InParanoid" id="O60264"/>
<dbReference type="OMA" id="PRMDEWQ"/>
<dbReference type="OrthoDB" id="5857104at2759"/>
<dbReference type="PAN-GO" id="O60264">
    <property type="GO annotations" value="4 GO annotations based on evolutionary models"/>
</dbReference>
<dbReference type="PhylomeDB" id="O60264"/>
<dbReference type="TreeFam" id="TF300674"/>
<dbReference type="PathwayCommons" id="O60264"/>
<dbReference type="Reactome" id="R-HSA-427413">
    <property type="pathway name" value="NoRC negatively regulates rRNA expression"/>
</dbReference>
<dbReference type="Reactome" id="R-HSA-5250924">
    <property type="pathway name" value="B-WICH complex positively regulates rRNA expression"/>
</dbReference>
<dbReference type="Reactome" id="R-HSA-5693565">
    <property type="pathway name" value="Recruitment and ATM-mediated phosphorylation of repair and signaling proteins at DNA double strand breaks"/>
</dbReference>
<dbReference type="Reactome" id="R-HSA-606279">
    <property type="pathway name" value="Deposition of new CENPA-containing nucleosomes at the centromere"/>
</dbReference>
<dbReference type="SignaLink" id="O60264"/>
<dbReference type="SIGNOR" id="O60264"/>
<dbReference type="BioGRID-ORCS" id="8467">
    <property type="hits" value="464 hits in 1176 CRISPR screens"/>
</dbReference>
<dbReference type="CD-CODE" id="232F8A39">
    <property type="entry name" value="P-body"/>
</dbReference>
<dbReference type="CD-CODE" id="91857CE7">
    <property type="entry name" value="Nucleolus"/>
</dbReference>
<dbReference type="ChiTaRS" id="SMARCA5">
    <property type="organism name" value="human"/>
</dbReference>
<dbReference type="GeneWiki" id="SMARCA5"/>
<dbReference type="GenomeRNAi" id="8467"/>
<dbReference type="Pharos" id="O60264">
    <property type="development level" value="Tbio"/>
</dbReference>
<dbReference type="PRO" id="PR:O60264"/>
<dbReference type="Proteomes" id="UP000005640">
    <property type="component" value="Chromosome 4"/>
</dbReference>
<dbReference type="RNAct" id="O60264">
    <property type="molecule type" value="protein"/>
</dbReference>
<dbReference type="Bgee" id="ENSG00000153147">
    <property type="expression patterns" value="Expressed in ventricular zone and 225 other cell types or tissues"/>
</dbReference>
<dbReference type="GO" id="GO:0016590">
    <property type="term" value="C:ACF complex"/>
    <property type="evidence" value="ECO:0000353"/>
    <property type="project" value="ComplexPortal"/>
</dbReference>
<dbReference type="GO" id="GO:0110016">
    <property type="term" value="C:B-WICH complex"/>
    <property type="evidence" value="ECO:0000314"/>
    <property type="project" value="ComplexPortal"/>
</dbReference>
<dbReference type="GO" id="GO:0090537">
    <property type="term" value="C:CERF complex"/>
    <property type="evidence" value="ECO:0007669"/>
    <property type="project" value="Ensembl"/>
</dbReference>
<dbReference type="GO" id="GO:0008623">
    <property type="term" value="C:CHRAC"/>
    <property type="evidence" value="ECO:0000303"/>
    <property type="project" value="ComplexPortal"/>
</dbReference>
<dbReference type="GO" id="GO:0000785">
    <property type="term" value="C:chromatin"/>
    <property type="evidence" value="ECO:0000318"/>
    <property type="project" value="GO_Central"/>
</dbReference>
<dbReference type="GO" id="GO:0005677">
    <property type="term" value="C:chromatin silencing complex"/>
    <property type="evidence" value="ECO:0007669"/>
    <property type="project" value="Ensembl"/>
</dbReference>
<dbReference type="GO" id="GO:0000793">
    <property type="term" value="C:condensed chromosome"/>
    <property type="evidence" value="ECO:0000314"/>
    <property type="project" value="UniProtKB"/>
</dbReference>
<dbReference type="GO" id="GO:0001650">
    <property type="term" value="C:fibrillar center"/>
    <property type="evidence" value="ECO:0000314"/>
    <property type="project" value="HPA"/>
</dbReference>
<dbReference type="GO" id="GO:0090536">
    <property type="term" value="C:NoRC complex"/>
    <property type="evidence" value="ECO:0000266"/>
    <property type="project" value="ComplexPortal"/>
</dbReference>
<dbReference type="GO" id="GO:0005730">
    <property type="term" value="C:nucleolus"/>
    <property type="evidence" value="ECO:0000303"/>
    <property type="project" value="ComplexPortal"/>
</dbReference>
<dbReference type="GO" id="GO:0005654">
    <property type="term" value="C:nucleoplasm"/>
    <property type="evidence" value="ECO:0000314"/>
    <property type="project" value="HPA"/>
</dbReference>
<dbReference type="GO" id="GO:0005634">
    <property type="term" value="C:nucleus"/>
    <property type="evidence" value="ECO:0000314"/>
    <property type="project" value="UniProtKB"/>
</dbReference>
<dbReference type="GO" id="GO:0016589">
    <property type="term" value="C:NURF complex"/>
    <property type="evidence" value="ECO:0000314"/>
    <property type="project" value="UniProtKB"/>
</dbReference>
<dbReference type="GO" id="GO:0005721">
    <property type="term" value="C:pericentric heterochromatin"/>
    <property type="evidence" value="ECO:0000269"/>
    <property type="project" value="ComplexPortal"/>
</dbReference>
<dbReference type="GO" id="GO:0031213">
    <property type="term" value="C:RSF complex"/>
    <property type="evidence" value="ECO:0000353"/>
    <property type="project" value="UniProtKB"/>
</dbReference>
<dbReference type="GO" id="GO:0035861">
    <property type="term" value="C:site of double-strand break"/>
    <property type="evidence" value="ECO:0000314"/>
    <property type="project" value="UniProtKB"/>
</dbReference>
<dbReference type="GO" id="GO:0090535">
    <property type="term" value="C:WICH complex"/>
    <property type="evidence" value="ECO:0000314"/>
    <property type="project" value="ComplexPortal"/>
</dbReference>
<dbReference type="GO" id="GO:0005524">
    <property type="term" value="F:ATP binding"/>
    <property type="evidence" value="ECO:0000314"/>
    <property type="project" value="UniProtKB"/>
</dbReference>
<dbReference type="GO" id="GO:0016887">
    <property type="term" value="F:ATP hydrolysis activity"/>
    <property type="evidence" value="ECO:0000314"/>
    <property type="project" value="UniProtKB"/>
</dbReference>
<dbReference type="GO" id="GO:0140658">
    <property type="term" value="F:ATP-dependent chromatin remodeler activity"/>
    <property type="evidence" value="ECO:0000314"/>
    <property type="project" value="UniProtKB"/>
</dbReference>
<dbReference type="GO" id="GO:0003682">
    <property type="term" value="F:chromatin binding"/>
    <property type="evidence" value="ECO:0000318"/>
    <property type="project" value="GO_Central"/>
</dbReference>
<dbReference type="GO" id="GO:0003677">
    <property type="term" value="F:DNA binding"/>
    <property type="evidence" value="ECO:0000314"/>
    <property type="project" value="UniProtKB"/>
</dbReference>
<dbReference type="GO" id="GO:0004386">
    <property type="term" value="F:helicase activity"/>
    <property type="evidence" value="ECO:0000304"/>
    <property type="project" value="ProtInc"/>
</dbReference>
<dbReference type="GO" id="GO:0140751">
    <property type="term" value="F:histone octamer slider activity"/>
    <property type="evidence" value="ECO:0000314"/>
    <property type="project" value="GO_Central"/>
</dbReference>
<dbReference type="GO" id="GO:0140750">
    <property type="term" value="F:nucleosome array spacer activity"/>
    <property type="evidence" value="ECO:0000318"/>
    <property type="project" value="GO_Central"/>
</dbReference>
<dbReference type="GO" id="GO:0031491">
    <property type="term" value="F:nucleosome binding"/>
    <property type="evidence" value="ECO:0007669"/>
    <property type="project" value="InterPro"/>
</dbReference>
<dbReference type="GO" id="GO:0140374">
    <property type="term" value="P:antiviral innate immune response"/>
    <property type="evidence" value="ECO:0000314"/>
    <property type="project" value="UniProt"/>
</dbReference>
<dbReference type="GO" id="GO:1990830">
    <property type="term" value="P:cellular response to leukemia inhibitory factor"/>
    <property type="evidence" value="ECO:0007669"/>
    <property type="project" value="Ensembl"/>
</dbReference>
<dbReference type="GO" id="GO:0006325">
    <property type="term" value="P:chromatin organization"/>
    <property type="evidence" value="ECO:0000314"/>
    <property type="project" value="ComplexPortal"/>
</dbReference>
<dbReference type="GO" id="GO:0006338">
    <property type="term" value="P:chromatin remodeling"/>
    <property type="evidence" value="ECO:0000314"/>
    <property type="project" value="UniProtKB"/>
</dbReference>
<dbReference type="GO" id="GO:0006974">
    <property type="term" value="P:DNA damage response"/>
    <property type="evidence" value="ECO:0000303"/>
    <property type="project" value="ComplexPortal"/>
</dbReference>
<dbReference type="GO" id="GO:0006346">
    <property type="term" value="P:DNA methylation-dependent constitutive heterochromatin formation"/>
    <property type="evidence" value="ECO:0000266"/>
    <property type="project" value="ComplexPortal"/>
</dbReference>
<dbReference type="GO" id="GO:0006281">
    <property type="term" value="P:DNA repair"/>
    <property type="evidence" value="ECO:0000314"/>
    <property type="project" value="UniProtKB"/>
</dbReference>
<dbReference type="GO" id="GO:0006352">
    <property type="term" value="P:DNA-templated transcription initiation"/>
    <property type="evidence" value="ECO:0000314"/>
    <property type="project" value="UniProtKB"/>
</dbReference>
<dbReference type="GO" id="GO:0031507">
    <property type="term" value="P:heterochromatin formation"/>
    <property type="evidence" value="ECO:0000266"/>
    <property type="project" value="ComplexPortal"/>
</dbReference>
<dbReference type="GO" id="GO:1905213">
    <property type="term" value="P:negative regulation of mitotic chromosome condensation"/>
    <property type="evidence" value="ECO:0000314"/>
    <property type="project" value="ComplexPortal"/>
</dbReference>
<dbReference type="GO" id="GO:0016479">
    <property type="term" value="P:negative regulation of transcription by RNA polymerase I"/>
    <property type="evidence" value="ECO:0000266"/>
    <property type="project" value="ComplexPortal"/>
</dbReference>
<dbReference type="GO" id="GO:0006334">
    <property type="term" value="P:nucleosome assembly"/>
    <property type="evidence" value="ECO:0000314"/>
    <property type="project" value="UniProtKB"/>
</dbReference>
<dbReference type="GO" id="GO:0045740">
    <property type="term" value="P:positive regulation of DNA replication"/>
    <property type="evidence" value="ECO:0000315"/>
    <property type="project" value="ComplexPortal"/>
</dbReference>
<dbReference type="GO" id="GO:0045943">
    <property type="term" value="P:positive regulation of transcription by RNA polymerase I"/>
    <property type="evidence" value="ECO:0000303"/>
    <property type="project" value="ComplexPortal"/>
</dbReference>
<dbReference type="GO" id="GO:0045944">
    <property type="term" value="P:positive regulation of transcription by RNA polymerase II"/>
    <property type="evidence" value="ECO:0000318"/>
    <property type="project" value="GO_Central"/>
</dbReference>
<dbReference type="GO" id="GO:0045945">
    <property type="term" value="P:positive regulation of transcription by RNA polymerase III"/>
    <property type="evidence" value="ECO:0000314"/>
    <property type="project" value="ComplexPortal"/>
</dbReference>
<dbReference type="GO" id="GO:0000183">
    <property type="term" value="P:rDNA heterochromatin formation"/>
    <property type="evidence" value="ECO:0000266"/>
    <property type="project" value="ComplexPortal"/>
</dbReference>
<dbReference type="GO" id="GO:0006275">
    <property type="term" value="P:regulation of DNA replication"/>
    <property type="evidence" value="ECO:0000315"/>
    <property type="project" value="ComplexPortal"/>
</dbReference>
<dbReference type="GO" id="GO:0006355">
    <property type="term" value="P:regulation of DNA-templated transcription"/>
    <property type="evidence" value="ECO:0000314"/>
    <property type="project" value="ComplexPortal"/>
</dbReference>
<dbReference type="GO" id="GO:0006357">
    <property type="term" value="P:regulation of transcription by RNA polymerase II"/>
    <property type="evidence" value="ECO:0000304"/>
    <property type="project" value="ProtInc"/>
</dbReference>
<dbReference type="CDD" id="cd18064">
    <property type="entry name" value="DEXHc_SMARCA5"/>
    <property type="match status" value="1"/>
</dbReference>
<dbReference type="CDD" id="cd00167">
    <property type="entry name" value="SANT"/>
    <property type="match status" value="1"/>
</dbReference>
<dbReference type="CDD" id="cd18793">
    <property type="entry name" value="SF2_C_SNF"/>
    <property type="match status" value="1"/>
</dbReference>
<dbReference type="FunFam" id="3.40.50.300:FF:000082">
    <property type="entry name" value="ISWI chromatin remodeling complex ATPase ISW1"/>
    <property type="match status" value="1"/>
</dbReference>
<dbReference type="FunFam" id="1.10.10.60:FF:000022">
    <property type="entry name" value="ISWI chromatin-remodeling complex ATPase CHR11 isoform A"/>
    <property type="match status" value="1"/>
</dbReference>
<dbReference type="FunFam" id="1.10.10.60:FF:000049">
    <property type="entry name" value="SWI/SNF-related matrix-associated actin-dependent regulator of chromatin subfamily A member"/>
    <property type="match status" value="1"/>
</dbReference>
<dbReference type="FunFam" id="1.10.1040.30:FF:000001">
    <property type="entry name" value="SWI/SNF-related matrix-associated actin-dependent regulator of chromatin subfamily A member"/>
    <property type="match status" value="1"/>
</dbReference>
<dbReference type="FunFam" id="1.20.5.1190:FF:000002">
    <property type="entry name" value="SWI/SNF-related matrix-associated actin-dependent regulator of chromatin subfamily A member"/>
    <property type="match status" value="1"/>
</dbReference>
<dbReference type="FunFam" id="3.40.50.10810:FF:000101">
    <property type="entry name" value="SWI/SNF-related, matrix-associated, actin-dependent regulator of"/>
    <property type="match status" value="1"/>
</dbReference>
<dbReference type="Gene3D" id="1.10.10.60">
    <property type="entry name" value="Homeodomain-like"/>
    <property type="match status" value="2"/>
</dbReference>
<dbReference type="Gene3D" id="1.20.5.1190">
    <property type="entry name" value="iswi atpase"/>
    <property type="match status" value="1"/>
</dbReference>
<dbReference type="Gene3D" id="1.10.1040.30">
    <property type="entry name" value="ISWI, HAND domain"/>
    <property type="match status" value="1"/>
</dbReference>
<dbReference type="Gene3D" id="3.40.50.300">
    <property type="entry name" value="P-loop containing nucleotide triphosphate hydrolases"/>
    <property type="match status" value="1"/>
</dbReference>
<dbReference type="Gene3D" id="3.40.50.10810">
    <property type="entry name" value="Tandem AAA-ATPase domain"/>
    <property type="match status" value="1"/>
</dbReference>
<dbReference type="InterPro" id="IPR014001">
    <property type="entry name" value="Helicase_ATP-bd"/>
</dbReference>
<dbReference type="InterPro" id="IPR001650">
    <property type="entry name" value="Helicase_C-like"/>
</dbReference>
<dbReference type="InterPro" id="IPR009057">
    <property type="entry name" value="Homeodomain-like_sf"/>
</dbReference>
<dbReference type="InterPro" id="IPR015194">
    <property type="entry name" value="ISWI_HAND-dom"/>
</dbReference>
<dbReference type="InterPro" id="IPR036306">
    <property type="entry name" value="ISWI_HAND-dom_sf"/>
</dbReference>
<dbReference type="InterPro" id="IPR027417">
    <property type="entry name" value="P-loop_NTPase"/>
</dbReference>
<dbReference type="InterPro" id="IPR001005">
    <property type="entry name" value="SANT/Myb"/>
</dbReference>
<dbReference type="InterPro" id="IPR017884">
    <property type="entry name" value="SANT_dom"/>
</dbReference>
<dbReference type="InterPro" id="IPR015195">
    <property type="entry name" value="SLIDE"/>
</dbReference>
<dbReference type="InterPro" id="IPR038718">
    <property type="entry name" value="SNF2-like_sf"/>
</dbReference>
<dbReference type="InterPro" id="IPR049730">
    <property type="entry name" value="SNF2/RAD54-like_C"/>
</dbReference>
<dbReference type="InterPro" id="IPR000330">
    <property type="entry name" value="SNF2_N"/>
</dbReference>
<dbReference type="PANTHER" id="PTHR45623">
    <property type="entry name" value="CHROMODOMAIN-HELICASE-DNA-BINDING PROTEIN 3-RELATED-RELATED"/>
    <property type="match status" value="1"/>
</dbReference>
<dbReference type="PANTHER" id="PTHR45623:SF54">
    <property type="entry name" value="SWI_SNF RELATED, MATRIX ASSOCIATED, ACTIN DEPENDENT REGULATOR OF CHROMATIN, SUBFAMILY A, MEMBER 5"/>
    <property type="match status" value="1"/>
</dbReference>
<dbReference type="Pfam" id="PF09110">
    <property type="entry name" value="HAND"/>
    <property type="match status" value="1"/>
</dbReference>
<dbReference type="Pfam" id="PF00271">
    <property type="entry name" value="Helicase_C"/>
    <property type="match status" value="1"/>
</dbReference>
<dbReference type="Pfam" id="PF09111">
    <property type="entry name" value="SLIDE"/>
    <property type="match status" value="1"/>
</dbReference>
<dbReference type="Pfam" id="PF00176">
    <property type="entry name" value="SNF2-rel_dom"/>
    <property type="match status" value="1"/>
</dbReference>
<dbReference type="SMART" id="SM00487">
    <property type="entry name" value="DEXDc"/>
    <property type="match status" value="1"/>
</dbReference>
<dbReference type="SMART" id="SM00490">
    <property type="entry name" value="HELICc"/>
    <property type="match status" value="1"/>
</dbReference>
<dbReference type="SMART" id="SM00717">
    <property type="entry name" value="SANT"/>
    <property type="match status" value="2"/>
</dbReference>
<dbReference type="SUPFAM" id="SSF101224">
    <property type="entry name" value="HAND domain of the nucleosome remodeling ATPase ISWI"/>
    <property type="match status" value="1"/>
</dbReference>
<dbReference type="SUPFAM" id="SSF46689">
    <property type="entry name" value="Homeodomain-like"/>
    <property type="match status" value="2"/>
</dbReference>
<dbReference type="SUPFAM" id="SSF52540">
    <property type="entry name" value="P-loop containing nucleoside triphosphate hydrolases"/>
    <property type="match status" value="2"/>
</dbReference>
<dbReference type="PROSITE" id="PS51192">
    <property type="entry name" value="HELICASE_ATP_BIND_1"/>
    <property type="match status" value="1"/>
</dbReference>
<dbReference type="PROSITE" id="PS51194">
    <property type="entry name" value="HELICASE_CTER"/>
    <property type="match status" value="1"/>
</dbReference>
<dbReference type="PROSITE" id="PS51293">
    <property type="entry name" value="SANT"/>
    <property type="match status" value="1"/>
</dbReference>
<organism>
    <name type="scientific">Homo sapiens</name>
    <name type="common">Human</name>
    <dbReference type="NCBI Taxonomy" id="9606"/>
    <lineage>
        <taxon>Eukaryota</taxon>
        <taxon>Metazoa</taxon>
        <taxon>Chordata</taxon>
        <taxon>Craniata</taxon>
        <taxon>Vertebrata</taxon>
        <taxon>Euteleostomi</taxon>
        <taxon>Mammalia</taxon>
        <taxon>Eutheria</taxon>
        <taxon>Euarchontoglires</taxon>
        <taxon>Primates</taxon>
        <taxon>Haplorrhini</taxon>
        <taxon>Catarrhini</taxon>
        <taxon>Hominidae</taxon>
        <taxon>Homo</taxon>
    </lineage>
</organism>
<reference key="1">
    <citation type="journal article" date="1998" name="Cytogenet. Cell Genet.">
        <title>Cloning and mapping of SMARCA5 encoding hSNF2H, a novel human homologue of Drosophila ISWI.</title>
        <authorList>
            <person name="Aihara T."/>
            <person name="Miyoshi Y."/>
            <person name="Koyama K."/>
            <person name="Suzuki M."/>
            <person name="Takahashi E."/>
            <person name="Monden M."/>
            <person name="Nakamura Y."/>
        </authorList>
    </citation>
    <scope>NUCLEOTIDE SEQUENCE [MRNA]</scope>
    <source>
        <tissue>Testis</tissue>
    </source>
</reference>
<reference key="2">
    <citation type="journal article" date="2004" name="Genome Res.">
        <title>The status, quality, and expansion of the NIH full-length cDNA project: the Mammalian Gene Collection (MGC).</title>
        <authorList>
            <consortium name="The MGC Project Team"/>
        </authorList>
    </citation>
    <scope>NUCLEOTIDE SEQUENCE [LARGE SCALE MRNA]</scope>
    <source>
        <tissue>Lymph</tissue>
    </source>
</reference>
<reference key="3">
    <citation type="journal article" date="2000" name="EMBO J.">
        <title>HuCHRAC, a human ISWI chromatin remodelling complex contains hACF1 and two novel histone-fold proteins.</title>
        <authorList>
            <person name="Poot R.A."/>
            <person name="Dellaire G."/>
            <person name="Huelsmann B.B."/>
            <person name="Grimaldi M.A."/>
            <person name="Corona D.F.V."/>
            <person name="Becker P.B."/>
            <person name="Bickmore W.A."/>
            <person name="Varga-Weisz P.D."/>
        </authorList>
    </citation>
    <scope>FUNCTION</scope>
    <scope>IDENTIFICATION IN THE CHRAC ISWI CHROMATIN REMODELING COMPLEX</scope>
    <scope>INTERACTION WITH BAZ1A; CHRAC1 AND POLE3</scope>
</reference>
<reference key="4">
    <citation type="journal article" date="2000" name="Leukemia">
        <title>Chromatin remodeling gene SMARCA5 is dysregulated in primitive hematopoietic cells of acute leukemia.</title>
        <authorList>
            <person name="Stopka T."/>
            <person name="Zakova D."/>
            <person name="Fuchs O."/>
            <person name="Kubrova O."/>
            <person name="Blafkova J."/>
            <person name="Jelinek J."/>
            <person name="Necas E."/>
            <person name="Zivny J."/>
        </authorList>
    </citation>
    <scope>DEVELOPMENTAL STAGE</scope>
</reference>
<reference key="5">
    <citation type="journal article" date="2000" name="Proc. Natl. Acad. Sci. U.S.A.">
        <title>A family of chromatin remodeling factors related to Williams syndrome transcription factor.</title>
        <authorList>
            <person name="Bochar D.A."/>
            <person name="Savard J."/>
            <person name="Wang W."/>
            <person name="Lafleur D.W."/>
            <person name="Moore P."/>
            <person name="Cote J."/>
            <person name="Shiekhattar R."/>
        </authorList>
    </citation>
    <scope>IDENTIFICATION IN THE ACF/WCRF COMPLEX WITH BAZ1A</scope>
</reference>
<reference key="6">
    <citation type="journal article" date="2001" name="J. Biol. Chem.">
        <title>Functional differences between the human ATP-dependent nucleosome remodeling proteins BRG1 and SNF2H.</title>
        <authorList>
            <person name="Aalfs J.D."/>
            <person name="Narlikar G.J."/>
            <person name="Kingston R.E."/>
        </authorList>
    </citation>
    <scope>CHARACTERIZATION</scope>
</reference>
<reference key="7">
    <citation type="journal article" date="2002" name="EMBO J.">
        <title>WSTF-ISWI chromatin remodeling complex targets heterochromatic replication foci.</title>
        <authorList>
            <person name="Bozhenok L."/>
            <person name="Wade P.A."/>
            <person name="Varga-Weisz P."/>
        </authorList>
    </citation>
    <scope>FUNCTION</scope>
    <scope>IDENTIFICATION IN THE WICH-5 ISWI CHROMATIN REMODELING COMPLEX</scope>
    <scope>INTERACTION WITH BAZ1B</scope>
</reference>
<reference key="8">
    <citation type="journal article" date="2002" name="Nat. Genet.">
        <title>An ACF1-ISWI chromatin-remodeling complex is required for DNA replication through heterochromatin.</title>
        <authorList>
            <person name="Collins N."/>
            <person name="Poot R.A."/>
            <person name="Kukimoto I."/>
            <person name="Garcia-Jimenez C."/>
            <person name="Dellaire G."/>
            <person name="Varga-Weisz P.D."/>
        </authorList>
    </citation>
    <scope>FUNCTION</scope>
    <scope>IDENTIFICATION IN THE CHRAC ISWI CHROMATIN REMODELING COMPLEX</scope>
    <scope>INTERACTION WITH BAZ1A; CHRAC1 AND POLE3</scope>
    <scope>SUBCELLULAR LOCATION</scope>
</reference>
<reference key="9">
    <citation type="journal article" date="2002" name="Nature">
        <title>A chromatin remodelling complex that loads cohesin onto human chromosomes.</title>
        <authorList>
            <person name="Hakimi M.-A."/>
            <person name="Bochar D.A."/>
            <person name="Schmiesing J.A."/>
            <person name="Dong Y."/>
            <person name="Barak O.G."/>
            <person name="Speicher D.W."/>
            <person name="Yokomori K."/>
            <person name="Shiekhattar R."/>
        </authorList>
    </citation>
    <scope>FUNCTION</scope>
    <scope>IDENTIFICATION IN THE ACF-5 ISWI CHROMATIN REMODELING COMPLEX</scope>
    <scope>INTERACTION WITH BAZ1A; RAD21; HDAC2; RBBP4 AND CHD4</scope>
    <scope>MUTAGENESIS OF LYS-211</scope>
</reference>
<reference key="10">
    <citation type="journal article" date="2003" name="Mol. Cell. Biol.">
        <title>Functional analysis of the subunits of the chromatin assembly factor RSF.</title>
        <authorList>
            <person name="Loyola A."/>
            <person name="Huang J.-Y."/>
            <person name="LeRoy G."/>
            <person name="Hu S."/>
            <person name="Wang Y.-H."/>
            <person name="Donnelly R.J."/>
            <person name="Lane W.S."/>
            <person name="Lee S.-C."/>
            <person name="Reinberg D."/>
        </authorList>
    </citation>
    <scope>FUNCTION</scope>
    <scope>CATALYTIC ACTIVITY</scope>
    <scope>IDENTIFICATION IN THE RSF-5 ISWI CHROMATIN REMODELING COMPLEX</scope>
    <scope>INTERACTION WITH RSF-1</scope>
    <scope>SUBCELLULAR LOCATION</scope>
</reference>
<reference key="11">
    <citation type="journal article" date="2004" name="Biochem. Cell Biol.">
        <title>Functional diversity of ISWI complexes.</title>
        <authorList>
            <person name="Dirscherl S.S."/>
            <person name="Krebs J.E."/>
        </authorList>
    </citation>
    <scope>REVIEW</scope>
    <scope>CHARACTERIZATION OF ISWI COMPLEXES</scope>
</reference>
<reference key="12">
    <citation type="journal article" date="2004" name="Mol. Cell">
        <title>The histone-fold protein complex CHRAC-15/17 enhances nucleosome sliding and assembly mediated by ACF.</title>
        <authorList>
            <person name="Kukimoto I."/>
            <person name="Elderkin S."/>
            <person name="Grimaldi M."/>
            <person name="Oelgeschlager T."/>
            <person name="Varga-Weisz P.D."/>
        </authorList>
    </citation>
    <scope>IDENTIFICATION IN THE CHRAC ISWI CHROMATIN REMODELING COMPLEX</scope>
    <scope>INTERACTION WITH BAZ1A</scope>
</reference>
<reference key="13">
    <citation type="journal article" date="2004" name="Nat. Cell Biol.">
        <title>The Williams syndrome transcription factor interacts with PCNA to target chromatin remodelling by ISWI to replication foci.</title>
        <authorList>
            <person name="Poot R.A."/>
            <person name="Bozhenok L."/>
            <person name="van den Berg D.L.C."/>
            <person name="Steffensen S."/>
            <person name="Ferreira F."/>
            <person name="Grimaldi M."/>
            <person name="Gilbert N."/>
            <person name="Ferreira J."/>
            <person name="Varga-Weisz P.D."/>
        </authorList>
    </citation>
    <scope>FUNCTION</scope>
    <scope>INTERACTION WITH BAZ1B AND PCNA</scope>
    <scope>SUBCELLULAR LOCATION</scope>
</reference>
<reference key="14">
    <citation type="journal article" date="2006" name="Cell">
        <title>Global, in vivo, and site-specific phosphorylation dynamics in signaling networks.</title>
        <authorList>
            <person name="Olsen J.V."/>
            <person name="Blagoev B."/>
            <person name="Gnad F."/>
            <person name="Macek B."/>
            <person name="Kumar C."/>
            <person name="Mortensen P."/>
            <person name="Mann M."/>
        </authorList>
    </citation>
    <scope>IDENTIFICATION BY MASS SPECTROMETRY [LARGE SCALE ANALYSIS]</scope>
    <source>
        <tissue>Cervix carcinoma</tissue>
    </source>
</reference>
<reference key="15">
    <citation type="journal article" date="2006" name="J. Biol. Chem.">
        <title>The WSTF-SNF2h chromatin remodeling complex interacts with several nuclear proteins in transcription.</title>
        <authorList>
            <person name="Cavellan E."/>
            <person name="Asp P."/>
            <person name="Percipalle P."/>
            <person name="Oestlund Farrants A.-K."/>
        </authorList>
    </citation>
    <scope>FUNCTION</scope>
    <scope>IDENTIFICATION IN THE B-WICH COMPLEX</scope>
    <scope>SUBCELLULAR LOCATION</scope>
</reference>
<reference key="16">
    <citation type="journal article" date="2007" name="Mol. Cell. Proteomics">
        <title>Quantitative phosphoproteome profiling of Wnt3a-mediated signaling network: indicating the involvement of ribonucleoside-diphosphate reductase M2 subunit phosphorylation at residue serine 20 in canonical Wnt signal transduction.</title>
        <authorList>
            <person name="Tang L.-Y."/>
            <person name="Deng N."/>
            <person name="Wang L.-S."/>
            <person name="Dai J."/>
            <person name="Wang Z.-L."/>
            <person name="Jiang X.-S."/>
            <person name="Li S.-J."/>
            <person name="Li L."/>
            <person name="Sheng Q.-H."/>
            <person name="Wu D.-Q."/>
            <person name="Li L."/>
            <person name="Zeng R."/>
        </authorList>
    </citation>
    <scope>PHOSPHORYLATION [LARGE SCALE ANALYSIS] AT SER-66</scope>
    <scope>IDENTIFICATION BY MASS SPECTROMETRY [LARGE SCALE ANALYSIS]</scope>
    <source>
        <tissue>Embryonic kidney</tissue>
    </source>
</reference>
<reference key="17">
    <citation type="journal article" date="2008" name="Mol. Cell">
        <title>Kinase-selective enrichment enables quantitative phosphoproteomics of the kinome across the cell cycle.</title>
        <authorList>
            <person name="Daub H."/>
            <person name="Olsen J.V."/>
            <person name="Bairlein M."/>
            <person name="Gnad F."/>
            <person name="Oppermann F.S."/>
            <person name="Korner R."/>
            <person name="Greff Z."/>
            <person name="Keri G."/>
            <person name="Stemmann O."/>
            <person name="Mann M."/>
        </authorList>
    </citation>
    <scope>PHOSPHORYLATION [LARGE SCALE ANALYSIS] AT SER-66</scope>
    <scope>IDENTIFICATION BY MASS SPECTROMETRY [LARGE SCALE ANALYSIS]</scope>
    <source>
        <tissue>Cervix carcinoma</tissue>
    </source>
</reference>
<reference key="18">
    <citation type="journal article" date="2008" name="Proc. Natl. Acad. Sci. U.S.A.">
        <title>A quantitative atlas of mitotic phosphorylation.</title>
        <authorList>
            <person name="Dephoure N."/>
            <person name="Zhou C."/>
            <person name="Villen J."/>
            <person name="Beausoleil S.A."/>
            <person name="Bakalarski C.E."/>
            <person name="Elledge S.J."/>
            <person name="Gygi S.P."/>
        </authorList>
    </citation>
    <scope>PHOSPHORYLATION [LARGE SCALE ANALYSIS] AT SER-66; SER-116 AND SER-137</scope>
    <scope>IDENTIFICATION BY MASS SPECTROMETRY [LARGE SCALE ANALYSIS]</scope>
    <source>
        <tissue>Cervix carcinoma</tissue>
    </source>
</reference>
<reference key="19">
    <citation type="journal article" date="2009" name="Anal. Chem.">
        <title>Lys-N and trypsin cover complementary parts of the phosphoproteome in a refined SCX-based approach.</title>
        <authorList>
            <person name="Gauci S."/>
            <person name="Helbig A.O."/>
            <person name="Slijper M."/>
            <person name="Krijgsveld J."/>
            <person name="Heck A.J."/>
            <person name="Mohammed S."/>
        </authorList>
    </citation>
    <scope>ACETYLATION [LARGE SCALE ANALYSIS] AT SER-2</scope>
    <scope>CLEAVAGE OF INITIATOR METHIONINE [LARGE SCALE ANALYSIS]</scope>
    <scope>IDENTIFICATION BY MASS SPECTROMETRY [LARGE SCALE ANALYSIS]</scope>
</reference>
<reference key="20">
    <citation type="journal article" date="2009" name="Sci. Signal.">
        <title>Quantitative phosphoproteomic analysis of T cell receptor signaling reveals system-wide modulation of protein-protein interactions.</title>
        <authorList>
            <person name="Mayya V."/>
            <person name="Lundgren D.H."/>
            <person name="Hwang S.-I."/>
            <person name="Rezaul K."/>
            <person name="Wu L."/>
            <person name="Eng J.K."/>
            <person name="Rodionov V."/>
            <person name="Han D.K."/>
        </authorList>
    </citation>
    <scope>PHOSPHORYLATION [LARGE SCALE ANALYSIS] AT SER-66</scope>
    <scope>IDENTIFICATION BY MASS SPECTROMETRY [LARGE SCALE ANALYSIS]</scope>
    <source>
        <tissue>Leukemic T-cell</tissue>
    </source>
</reference>
<reference key="21">
    <citation type="journal article" date="2009" name="Science">
        <title>Lysine acetylation targets protein complexes and co-regulates major cellular functions.</title>
        <authorList>
            <person name="Choudhary C."/>
            <person name="Kumar C."/>
            <person name="Gnad F."/>
            <person name="Nielsen M.L."/>
            <person name="Rehman M."/>
            <person name="Walther T.C."/>
            <person name="Olsen J.V."/>
            <person name="Mann M."/>
        </authorList>
    </citation>
    <scope>ACETYLATION [LARGE SCALE ANALYSIS] AT LYS-440</scope>
    <scope>IDENTIFICATION BY MASS SPECTROMETRY [LARGE SCALE ANALYSIS]</scope>
</reference>
<reference key="22">
    <citation type="journal article" date="2010" name="Sci. Signal.">
        <title>Quantitative phosphoproteomics reveals widespread full phosphorylation site occupancy during mitosis.</title>
        <authorList>
            <person name="Olsen J.V."/>
            <person name="Vermeulen M."/>
            <person name="Santamaria A."/>
            <person name="Kumar C."/>
            <person name="Miller M.L."/>
            <person name="Jensen L.J."/>
            <person name="Gnad F."/>
            <person name="Cox J."/>
            <person name="Jensen T.S."/>
            <person name="Nigg E.A."/>
            <person name="Brunak S."/>
            <person name="Mann M."/>
        </authorList>
    </citation>
    <scope>PHOSPHORYLATION [LARGE SCALE ANALYSIS] AT THR-113; SER-137 AND SER-825</scope>
    <scope>IDENTIFICATION BY MASS SPECTROMETRY [LARGE SCALE ANALYSIS]</scope>
    <source>
        <tissue>Cervix carcinoma</tissue>
    </source>
</reference>
<reference key="23">
    <citation type="journal article" date="2011" name="BMC Syst. Biol.">
        <title>Initial characterization of the human central proteome.</title>
        <authorList>
            <person name="Burkard T.R."/>
            <person name="Planyavsky M."/>
            <person name="Kaupe I."/>
            <person name="Breitwieser F.P."/>
            <person name="Buerckstuemmer T."/>
            <person name="Bennett K.L."/>
            <person name="Superti-Furga G."/>
            <person name="Colinge J."/>
        </authorList>
    </citation>
    <scope>IDENTIFICATION BY MASS SPECTROMETRY [LARGE SCALE ANALYSIS]</scope>
</reference>
<reference key="24">
    <citation type="journal article" date="2011" name="Sci. Signal.">
        <title>System-wide temporal characterization of the proteome and phosphoproteome of human embryonic stem cell differentiation.</title>
        <authorList>
            <person name="Rigbolt K.T."/>
            <person name="Prokhorova T.A."/>
            <person name="Akimov V."/>
            <person name="Henningsen J."/>
            <person name="Johansen P.T."/>
            <person name="Kratchmarova I."/>
            <person name="Kassem M."/>
            <person name="Mann M."/>
            <person name="Olsen J.V."/>
            <person name="Blagoev B."/>
        </authorList>
    </citation>
    <scope>PHOSPHORYLATION [LARGE SCALE ANALYSIS] AT SER-825</scope>
    <scope>IDENTIFICATION BY MASS SPECTROMETRY [LARGE SCALE ANALYSIS]</scope>
</reference>
<reference key="25">
    <citation type="journal article" date="2013" name="J. Proteome Res.">
        <title>Toward a comprehensive characterization of a human cancer cell phosphoproteome.</title>
        <authorList>
            <person name="Zhou H."/>
            <person name="Di Palma S."/>
            <person name="Preisinger C."/>
            <person name="Peng M."/>
            <person name="Polat A.N."/>
            <person name="Heck A.J."/>
            <person name="Mohammed S."/>
        </authorList>
    </citation>
    <scope>PHOSPHORYLATION [LARGE SCALE ANALYSIS] AT SER-116; SER-137; SER-171 AND SER-755</scope>
    <scope>IDENTIFICATION BY MASS SPECTROMETRY [LARGE SCALE ANALYSIS]</scope>
    <source>
        <tissue>Cervix carcinoma</tissue>
        <tissue>Erythroleukemia</tissue>
    </source>
</reference>
<reference key="26">
    <citation type="journal article" date="2013" name="Mol. Cell">
        <title>SIRT6 recruits SNF2H to DNA break sites, preventing genomic instability through chromatin remodeling.</title>
        <authorList>
            <person name="Toiber D."/>
            <person name="Erdel F."/>
            <person name="Bouazoune K."/>
            <person name="Silberman D.M."/>
            <person name="Zhong L."/>
            <person name="Mulligan P."/>
            <person name="Sebastian C."/>
            <person name="Cosentino C."/>
            <person name="Martinez-Pastor B."/>
            <person name="Giacosa S."/>
            <person name="D'Urso A."/>
            <person name="Naeaer A.M."/>
            <person name="Kingston R."/>
            <person name="Rippe K."/>
            <person name="Mostoslavsky R."/>
        </authorList>
    </citation>
    <scope>FUNCTION</scope>
    <scope>INTERACTION WITH SIRT6</scope>
</reference>
<reference key="27">
    <citation type="journal article" date="2014" name="J. Proteomics">
        <title>An enzyme assisted RP-RPLC approach for in-depth analysis of human liver phosphoproteome.</title>
        <authorList>
            <person name="Bian Y."/>
            <person name="Song C."/>
            <person name="Cheng K."/>
            <person name="Dong M."/>
            <person name="Wang F."/>
            <person name="Huang J."/>
            <person name="Sun D."/>
            <person name="Wang L."/>
            <person name="Ye M."/>
            <person name="Zou H."/>
        </authorList>
    </citation>
    <scope>PHOSPHORYLATION [LARGE SCALE ANALYSIS] AT SER-66</scope>
    <scope>IDENTIFICATION BY MASS SPECTROMETRY [LARGE SCALE ANALYSIS]</scope>
    <source>
        <tissue>Liver</tissue>
    </source>
</reference>
<reference key="28">
    <citation type="journal article" date="2015" name="Proc. Natl. Acad. Sci. U.S.A.">
        <title>BEND3 represses rDNA transcription by stabilizing a NoRC component via USP21 deubiquitinase.</title>
        <authorList>
            <person name="Khan A."/>
            <person name="Giri S."/>
            <person name="Wang Y."/>
            <person name="Chakraborty A."/>
            <person name="Ghosh A.K."/>
            <person name="Anantharaman A."/>
            <person name="Aggarwal V."/>
            <person name="Sathyan K.M."/>
            <person name="Ha T."/>
            <person name="Prasanth K.V."/>
            <person name="Prasanth S.G."/>
        </authorList>
    </citation>
    <scope>INTERACTION WITH BEND3</scope>
</reference>
<reference key="29">
    <citation type="journal article" date="2017" name="EMBO Rep.">
        <title>Expansion of the ISWI chromatin remodeler family with new active complexes.</title>
        <authorList>
            <person name="Oppikofer M."/>
            <person name="Bai T."/>
            <person name="Gan Y."/>
            <person name="Haley B."/>
            <person name="Liu P."/>
            <person name="Sandoval W."/>
            <person name="Ciferri C."/>
            <person name="Cochran A.G."/>
        </authorList>
    </citation>
    <scope>FUNCTION</scope>
    <scope>IDENTIFICATION IN THE ACF-5 ISWI CHROMATIN REMODELING COMPLEX</scope>
    <scope>IDENTIFICATION IN THE WICH-5 ISWI CHROMATIN REMODELING COMPLEX</scope>
    <scope>IDENTIFICATION IN THE NORC-5 ISWI CHROMATIN REMODELING COMPLEX</scope>
    <scope>IDENTIFICATION IN THE BRF-5 ISWI CHROMATIN REMODELING COMPLEX</scope>
    <scope>IDENTIFICATION IN THE NURF-5 ISWI CHROMATIN REMODELING COMPLEX</scope>
    <scope>IDENTIFICATION IN THE CERF-5 ISWI CHROMATIN REMODELING COMPLEX</scope>
    <scope>IDENTIFICATION IN THE RSF-5 ISWI CHROMATIN REMODELING COMPLEX</scope>
    <scope>INTERACTION WITH BAZ1A; BAZ1B; BAZ2A; BAZ2B; BPFT; CECR2 AND RSF1</scope>
</reference>
<reference key="30">
    <citation type="journal article" date="2017" name="Nat. Struct. Mol. Biol.">
        <title>Site-specific mapping of the human SUMO proteome reveals co-modification with phosphorylation.</title>
        <authorList>
            <person name="Hendriks I.A."/>
            <person name="Lyon D."/>
            <person name="Young C."/>
            <person name="Jensen L.J."/>
            <person name="Vertegaal A.C."/>
            <person name="Nielsen M.L."/>
        </authorList>
    </citation>
    <scope>SUMOYLATION [LARGE SCALE ANALYSIS] AT LYS-83; LYS-644; LYS-647; LYS-694; LYS-722; LYS-735 AND LYS-966</scope>
    <scope>IDENTIFICATION BY MASS SPECTROMETRY [LARGE SCALE ANALYSIS]</scope>
</reference>
<reference key="31">
    <citation type="journal article" date="2019" name="Life. Sci Alliance">
        <title>BZLF1 interacts with chromatin remodelers promoting escape from latent infections with EBV.</title>
        <authorList>
            <person name="Schaeffner M."/>
            <person name="Mrozek-Gorska P."/>
            <person name="Buschle A."/>
            <person name="Woellmer A."/>
            <person name="Tagawa T."/>
            <person name="Cernilogar F.M."/>
            <person name="Schotta G."/>
            <person name="Krietenstein N."/>
            <person name="Lieleg C."/>
            <person name="Korber P."/>
            <person name="Hammerschmidt W."/>
        </authorList>
    </citation>
    <scope>INTERACTION WITH EPSTEIN-BARR VIRUS BZLF1 (MICROBIAL INFECTION)</scope>
</reference>
<reference key="32">
    <citation type="journal article" date="2020" name="Viruses">
        <title>A Comprehensive Proteomics Analysis of the JC Virus (JCV) Large and Small Tumor Antigen Interacting Proteins: Large T Primarily Targets the Host Protein Complexes with V-ATPase and Ubiquitin Ligase Activities While Small t Mostly Associates with Those Having Phosphatase and Chromatin-Remodeling Functions.</title>
        <authorList>
            <person name="Saribas S."/>
            <person name="Safak M."/>
        </authorList>
    </citation>
    <scope>SUBCELLULAR LOCATION</scope>
    <scope>INTERACTION WITH JC VIRUS SMALL T ANTIGEN (MICROBIAL INFECTION)</scope>
</reference>